<dbReference type="EC" id="2.3.1.274" evidence="1"/>
<dbReference type="EMBL" id="AE017354">
    <property type="protein sequence ID" value="AAU27474.1"/>
    <property type="molecule type" value="Genomic_DNA"/>
</dbReference>
<dbReference type="RefSeq" id="WP_010947122.1">
    <property type="nucleotide sequence ID" value="NC_002942.5"/>
</dbReference>
<dbReference type="RefSeq" id="YP_095421.1">
    <property type="nucleotide sequence ID" value="NC_002942.5"/>
</dbReference>
<dbReference type="SMR" id="Q5ZVP8"/>
<dbReference type="STRING" id="272624.lpg1392"/>
<dbReference type="PaxDb" id="272624-lpg1392"/>
<dbReference type="GeneID" id="57035382"/>
<dbReference type="KEGG" id="lpn:lpg1392"/>
<dbReference type="PATRIC" id="fig|272624.6.peg.1462"/>
<dbReference type="eggNOG" id="COG0416">
    <property type="taxonomic scope" value="Bacteria"/>
</dbReference>
<dbReference type="HOGENOM" id="CLU_039379_1_1_6"/>
<dbReference type="OrthoDB" id="9806408at2"/>
<dbReference type="UniPathway" id="UPA00085"/>
<dbReference type="Proteomes" id="UP000000609">
    <property type="component" value="Chromosome"/>
</dbReference>
<dbReference type="GO" id="GO:0005737">
    <property type="term" value="C:cytoplasm"/>
    <property type="evidence" value="ECO:0007669"/>
    <property type="project" value="UniProtKB-SubCell"/>
</dbReference>
<dbReference type="GO" id="GO:0043811">
    <property type="term" value="F:phosphate:acyl-[acyl carrier protein] acyltransferase activity"/>
    <property type="evidence" value="ECO:0007669"/>
    <property type="project" value="UniProtKB-UniRule"/>
</dbReference>
<dbReference type="GO" id="GO:0006633">
    <property type="term" value="P:fatty acid biosynthetic process"/>
    <property type="evidence" value="ECO:0007669"/>
    <property type="project" value="UniProtKB-UniRule"/>
</dbReference>
<dbReference type="GO" id="GO:0008654">
    <property type="term" value="P:phospholipid biosynthetic process"/>
    <property type="evidence" value="ECO:0007669"/>
    <property type="project" value="UniProtKB-KW"/>
</dbReference>
<dbReference type="Gene3D" id="3.40.718.10">
    <property type="entry name" value="Isopropylmalate Dehydrogenase"/>
    <property type="match status" value="1"/>
</dbReference>
<dbReference type="HAMAP" id="MF_00019">
    <property type="entry name" value="PlsX"/>
    <property type="match status" value="1"/>
</dbReference>
<dbReference type="InterPro" id="IPR003664">
    <property type="entry name" value="FA_synthesis"/>
</dbReference>
<dbReference type="InterPro" id="IPR012281">
    <property type="entry name" value="Phospholipid_synth_PlsX-like"/>
</dbReference>
<dbReference type="NCBIfam" id="TIGR00182">
    <property type="entry name" value="plsX"/>
    <property type="match status" value="1"/>
</dbReference>
<dbReference type="PANTHER" id="PTHR30100">
    <property type="entry name" value="FATTY ACID/PHOSPHOLIPID SYNTHESIS PROTEIN PLSX"/>
    <property type="match status" value="1"/>
</dbReference>
<dbReference type="PANTHER" id="PTHR30100:SF1">
    <property type="entry name" value="PHOSPHATE ACYLTRANSFERASE"/>
    <property type="match status" value="1"/>
</dbReference>
<dbReference type="Pfam" id="PF02504">
    <property type="entry name" value="FA_synthesis"/>
    <property type="match status" value="1"/>
</dbReference>
<dbReference type="PIRSF" id="PIRSF002465">
    <property type="entry name" value="Phsphlp_syn_PlsX"/>
    <property type="match status" value="1"/>
</dbReference>
<dbReference type="SUPFAM" id="SSF53659">
    <property type="entry name" value="Isocitrate/Isopropylmalate dehydrogenase-like"/>
    <property type="match status" value="1"/>
</dbReference>
<comment type="function">
    <text evidence="1">Catalyzes the reversible formation of acyl-phosphate (acyl-PO(4)) from acyl-[acyl-carrier-protein] (acyl-ACP). This enzyme utilizes acyl-ACP as fatty acyl donor, but not acyl-CoA.</text>
</comment>
<comment type="catalytic activity">
    <reaction evidence="1">
        <text>a fatty acyl-[ACP] + phosphate = an acyl phosphate + holo-[ACP]</text>
        <dbReference type="Rhea" id="RHEA:42292"/>
        <dbReference type="Rhea" id="RHEA-COMP:9685"/>
        <dbReference type="Rhea" id="RHEA-COMP:14125"/>
        <dbReference type="ChEBI" id="CHEBI:43474"/>
        <dbReference type="ChEBI" id="CHEBI:59918"/>
        <dbReference type="ChEBI" id="CHEBI:64479"/>
        <dbReference type="ChEBI" id="CHEBI:138651"/>
        <dbReference type="EC" id="2.3.1.274"/>
    </reaction>
</comment>
<comment type="pathway">
    <text evidence="1">Lipid metabolism; phospholipid metabolism.</text>
</comment>
<comment type="subunit">
    <text evidence="1">Homodimer. Probably interacts with PlsY.</text>
</comment>
<comment type="subcellular location">
    <subcellularLocation>
        <location evidence="1">Cytoplasm</location>
    </subcellularLocation>
    <text evidence="1">Associated with the membrane possibly through PlsY.</text>
</comment>
<comment type="similarity">
    <text evidence="1">Belongs to the PlsX family.</text>
</comment>
<evidence type="ECO:0000255" key="1">
    <source>
        <dbReference type="HAMAP-Rule" id="MF_00019"/>
    </source>
</evidence>
<proteinExistence type="inferred from homology"/>
<protein>
    <recommendedName>
        <fullName evidence="1">Phosphate acyltransferase</fullName>
        <ecNumber evidence="1">2.3.1.274</ecNumber>
    </recommendedName>
    <alternativeName>
        <fullName evidence="1">Acyl-ACP phosphotransacylase</fullName>
    </alternativeName>
    <alternativeName>
        <fullName evidence="1">Acyl-[acyl-carrier-protein]--phosphate acyltransferase</fullName>
    </alternativeName>
    <alternativeName>
        <fullName evidence="1">Phosphate-acyl-ACP acyltransferase</fullName>
    </alternativeName>
</protein>
<gene>
    <name evidence="1" type="primary">plsX</name>
    <name type="ordered locus">lpg1392</name>
</gene>
<keyword id="KW-0963">Cytoplasm</keyword>
<keyword id="KW-0444">Lipid biosynthesis</keyword>
<keyword id="KW-0443">Lipid metabolism</keyword>
<keyword id="KW-0594">Phospholipid biosynthesis</keyword>
<keyword id="KW-1208">Phospholipid metabolism</keyword>
<keyword id="KW-1185">Reference proteome</keyword>
<keyword id="KW-0808">Transferase</keyword>
<sequence length="342" mass="36758">MKNITIAIDAMGGDHGLEIVIPACIRAIKNNPDLKLLLVGVQDKISASLKKHGMLSCQQFTIVHASEVVTMDELPSHALRNKKDSSMRIAINLVKEGRAQACVSAGNTGALMATARYVLKTLPGIDRPAIVSELPTMGGKTRVIDLGANVDSCAEHLFQFAVMGSALIQAIENKPKPKIGLLNIGVEEIKGNDQVKRTAHMLAECSVMNYVGYVEGDHFYSGDVDLVVCDGFVGNVALKASEGLAKLLLTVLKESFSRNWLTKIAGLIALPALKHLKNRLDPSRYNGASLLGLNGIVVKSHGGANEVGFQHAIEQAVLEVKNNVVDLVRDQINDFINQGLLL</sequence>
<reference key="1">
    <citation type="journal article" date="2004" name="Science">
        <title>The genomic sequence of the accidental pathogen Legionella pneumophila.</title>
        <authorList>
            <person name="Chien M."/>
            <person name="Morozova I."/>
            <person name="Shi S."/>
            <person name="Sheng H."/>
            <person name="Chen J."/>
            <person name="Gomez S.M."/>
            <person name="Asamani G."/>
            <person name="Hill K."/>
            <person name="Nuara J."/>
            <person name="Feder M."/>
            <person name="Rineer J."/>
            <person name="Greenberg J.J."/>
            <person name="Steshenko V."/>
            <person name="Park S.H."/>
            <person name="Zhao B."/>
            <person name="Teplitskaya E."/>
            <person name="Edwards J.R."/>
            <person name="Pampou S."/>
            <person name="Georghiou A."/>
            <person name="Chou I.-C."/>
            <person name="Iannuccilli W."/>
            <person name="Ulz M.E."/>
            <person name="Kim D.H."/>
            <person name="Geringer-Sameth A."/>
            <person name="Goldsberry C."/>
            <person name="Morozov P."/>
            <person name="Fischer S.G."/>
            <person name="Segal G."/>
            <person name="Qu X."/>
            <person name="Rzhetsky A."/>
            <person name="Zhang P."/>
            <person name="Cayanis E."/>
            <person name="De Jong P.J."/>
            <person name="Ju J."/>
            <person name="Kalachikov S."/>
            <person name="Shuman H.A."/>
            <person name="Russo J.J."/>
        </authorList>
    </citation>
    <scope>NUCLEOTIDE SEQUENCE [LARGE SCALE GENOMIC DNA]</scope>
    <source>
        <strain>Philadelphia 1 / ATCC 33152 / DSM 7513</strain>
    </source>
</reference>
<accession>Q5ZVP8</accession>
<feature type="chain" id="PRO_0000189894" description="Phosphate acyltransferase">
    <location>
        <begin position="1"/>
        <end position="342"/>
    </location>
</feature>
<organism>
    <name type="scientific">Legionella pneumophila subsp. pneumophila (strain Philadelphia 1 / ATCC 33152 / DSM 7513)</name>
    <dbReference type="NCBI Taxonomy" id="272624"/>
    <lineage>
        <taxon>Bacteria</taxon>
        <taxon>Pseudomonadati</taxon>
        <taxon>Pseudomonadota</taxon>
        <taxon>Gammaproteobacteria</taxon>
        <taxon>Legionellales</taxon>
        <taxon>Legionellaceae</taxon>
        <taxon>Legionella</taxon>
    </lineage>
</organism>
<name>PLSX_LEGPH</name>